<keyword id="KW-0030">Aminoacyl-tRNA synthetase</keyword>
<keyword id="KW-0067">ATP-binding</keyword>
<keyword id="KW-0963">Cytoplasm</keyword>
<keyword id="KW-0436">Ligase</keyword>
<keyword id="KW-0460">Magnesium</keyword>
<keyword id="KW-0479">Metal-binding</keyword>
<keyword id="KW-0547">Nucleotide-binding</keyword>
<keyword id="KW-0648">Protein biosynthesis</keyword>
<proteinExistence type="inferred from homology"/>
<organism>
    <name type="scientific">Bordetella bronchiseptica (strain ATCC BAA-588 / NCTC 13252 / RB50)</name>
    <name type="common">Alcaligenes bronchisepticus</name>
    <dbReference type="NCBI Taxonomy" id="257310"/>
    <lineage>
        <taxon>Bacteria</taxon>
        <taxon>Pseudomonadati</taxon>
        <taxon>Pseudomonadota</taxon>
        <taxon>Betaproteobacteria</taxon>
        <taxon>Burkholderiales</taxon>
        <taxon>Alcaligenaceae</taxon>
        <taxon>Bordetella</taxon>
    </lineage>
</organism>
<feature type="chain" id="PRO_0000126670" description="Phenylalanine--tRNA ligase alpha subunit">
    <location>
        <begin position="1"/>
        <end position="348"/>
    </location>
</feature>
<feature type="binding site" evidence="1">
    <location>
        <position position="268"/>
    </location>
    <ligand>
        <name>Mg(2+)</name>
        <dbReference type="ChEBI" id="CHEBI:18420"/>
        <note>shared with beta subunit</note>
    </ligand>
</feature>
<sequence length="348" mass="39230">MRFEGSNSMTLLVDDLVSQAQERFAAASDAAALENAKARFLGKEGALTVLLKALGKLDPEQKREMGARINQAKQQIEALLNARRAALAQAELDARLASETIDVTLPGRGKAAGGIHPVIRTWERVEEIFRSIGFDVADGPEVENDWTNFTALNNPLDHPARSMQDTFYVDMHDADGLPLLLRTHTSPMQVRYARMHKPPIKVIAPGRTYRVDSDATHSPMFHQVEGLWIAEDISFADLKGVYTDFLRCFFESDDLVVRFRPSFFPFTEPSAEIDMMFTSGPNRGRWLEISGSGQVHPQVVRNFGLDPERYIGFAFGSGLERLTMLRYGVNDLRQFYEGDLRFLRQFNE</sequence>
<gene>
    <name evidence="1" type="primary">pheS</name>
    <name type="ordered locus">BB2040</name>
</gene>
<evidence type="ECO:0000255" key="1">
    <source>
        <dbReference type="HAMAP-Rule" id="MF_00281"/>
    </source>
</evidence>
<comment type="catalytic activity">
    <reaction evidence="1">
        <text>tRNA(Phe) + L-phenylalanine + ATP = L-phenylalanyl-tRNA(Phe) + AMP + diphosphate + H(+)</text>
        <dbReference type="Rhea" id="RHEA:19413"/>
        <dbReference type="Rhea" id="RHEA-COMP:9668"/>
        <dbReference type="Rhea" id="RHEA-COMP:9699"/>
        <dbReference type="ChEBI" id="CHEBI:15378"/>
        <dbReference type="ChEBI" id="CHEBI:30616"/>
        <dbReference type="ChEBI" id="CHEBI:33019"/>
        <dbReference type="ChEBI" id="CHEBI:58095"/>
        <dbReference type="ChEBI" id="CHEBI:78442"/>
        <dbReference type="ChEBI" id="CHEBI:78531"/>
        <dbReference type="ChEBI" id="CHEBI:456215"/>
        <dbReference type="EC" id="6.1.1.20"/>
    </reaction>
</comment>
<comment type="cofactor">
    <cofactor evidence="1">
        <name>Mg(2+)</name>
        <dbReference type="ChEBI" id="CHEBI:18420"/>
    </cofactor>
    <text evidence="1">Binds 2 magnesium ions per tetramer.</text>
</comment>
<comment type="subunit">
    <text evidence="1">Tetramer of two alpha and two beta subunits.</text>
</comment>
<comment type="subcellular location">
    <subcellularLocation>
        <location evidence="1">Cytoplasm</location>
    </subcellularLocation>
</comment>
<comment type="similarity">
    <text evidence="1">Belongs to the class-II aminoacyl-tRNA synthetase family. Phe-tRNA synthetase alpha subunit type 1 subfamily.</text>
</comment>
<protein>
    <recommendedName>
        <fullName evidence="1">Phenylalanine--tRNA ligase alpha subunit</fullName>
        <ecNumber evidence="1">6.1.1.20</ecNumber>
    </recommendedName>
    <alternativeName>
        <fullName evidence="1">Phenylalanyl-tRNA synthetase alpha subunit</fullName>
        <shortName evidence="1">PheRS</shortName>
    </alternativeName>
</protein>
<accession>Q7WKR5</accession>
<dbReference type="EC" id="6.1.1.20" evidence="1"/>
<dbReference type="EMBL" id="BX640443">
    <property type="protein sequence ID" value="CAE32536.1"/>
    <property type="molecule type" value="Genomic_DNA"/>
</dbReference>
<dbReference type="SMR" id="Q7WKR5"/>
<dbReference type="KEGG" id="bbr:BB2040"/>
<dbReference type="eggNOG" id="COG0016">
    <property type="taxonomic scope" value="Bacteria"/>
</dbReference>
<dbReference type="HOGENOM" id="CLU_025086_0_1_4"/>
<dbReference type="Proteomes" id="UP000001027">
    <property type="component" value="Chromosome"/>
</dbReference>
<dbReference type="GO" id="GO:0005737">
    <property type="term" value="C:cytoplasm"/>
    <property type="evidence" value="ECO:0007669"/>
    <property type="project" value="UniProtKB-SubCell"/>
</dbReference>
<dbReference type="GO" id="GO:0005524">
    <property type="term" value="F:ATP binding"/>
    <property type="evidence" value="ECO:0007669"/>
    <property type="project" value="UniProtKB-UniRule"/>
</dbReference>
<dbReference type="GO" id="GO:0000287">
    <property type="term" value="F:magnesium ion binding"/>
    <property type="evidence" value="ECO:0007669"/>
    <property type="project" value="UniProtKB-UniRule"/>
</dbReference>
<dbReference type="GO" id="GO:0004826">
    <property type="term" value="F:phenylalanine-tRNA ligase activity"/>
    <property type="evidence" value="ECO:0007669"/>
    <property type="project" value="UniProtKB-UniRule"/>
</dbReference>
<dbReference type="GO" id="GO:0000049">
    <property type="term" value="F:tRNA binding"/>
    <property type="evidence" value="ECO:0007669"/>
    <property type="project" value="InterPro"/>
</dbReference>
<dbReference type="GO" id="GO:0006432">
    <property type="term" value="P:phenylalanyl-tRNA aminoacylation"/>
    <property type="evidence" value="ECO:0007669"/>
    <property type="project" value="UniProtKB-UniRule"/>
</dbReference>
<dbReference type="CDD" id="cd00496">
    <property type="entry name" value="PheRS_alpha_core"/>
    <property type="match status" value="1"/>
</dbReference>
<dbReference type="FunFam" id="3.30.930.10:FF:000003">
    <property type="entry name" value="Phenylalanine--tRNA ligase alpha subunit"/>
    <property type="match status" value="1"/>
</dbReference>
<dbReference type="Gene3D" id="3.30.930.10">
    <property type="entry name" value="Bira Bifunctional Protein, Domain 2"/>
    <property type="match status" value="1"/>
</dbReference>
<dbReference type="HAMAP" id="MF_00281">
    <property type="entry name" value="Phe_tRNA_synth_alpha1"/>
    <property type="match status" value="1"/>
</dbReference>
<dbReference type="InterPro" id="IPR006195">
    <property type="entry name" value="aa-tRNA-synth_II"/>
</dbReference>
<dbReference type="InterPro" id="IPR045864">
    <property type="entry name" value="aa-tRNA-synth_II/BPL/LPL"/>
</dbReference>
<dbReference type="InterPro" id="IPR004529">
    <property type="entry name" value="Phe-tRNA-synth_IIc_asu"/>
</dbReference>
<dbReference type="InterPro" id="IPR004188">
    <property type="entry name" value="Phe-tRNA_ligase_II_N"/>
</dbReference>
<dbReference type="InterPro" id="IPR022911">
    <property type="entry name" value="Phe_tRNA_ligase_alpha1_bac"/>
</dbReference>
<dbReference type="InterPro" id="IPR002319">
    <property type="entry name" value="Phenylalanyl-tRNA_Synthase"/>
</dbReference>
<dbReference type="InterPro" id="IPR010978">
    <property type="entry name" value="tRNA-bd_arm"/>
</dbReference>
<dbReference type="NCBIfam" id="TIGR00468">
    <property type="entry name" value="pheS"/>
    <property type="match status" value="1"/>
</dbReference>
<dbReference type="PANTHER" id="PTHR11538:SF41">
    <property type="entry name" value="PHENYLALANINE--TRNA LIGASE, MITOCHONDRIAL"/>
    <property type="match status" value="1"/>
</dbReference>
<dbReference type="PANTHER" id="PTHR11538">
    <property type="entry name" value="PHENYLALANYL-TRNA SYNTHETASE"/>
    <property type="match status" value="1"/>
</dbReference>
<dbReference type="Pfam" id="PF02912">
    <property type="entry name" value="Phe_tRNA-synt_N"/>
    <property type="match status" value="1"/>
</dbReference>
<dbReference type="Pfam" id="PF01409">
    <property type="entry name" value="tRNA-synt_2d"/>
    <property type="match status" value="1"/>
</dbReference>
<dbReference type="SUPFAM" id="SSF55681">
    <property type="entry name" value="Class II aaRS and biotin synthetases"/>
    <property type="match status" value="1"/>
</dbReference>
<dbReference type="SUPFAM" id="SSF46589">
    <property type="entry name" value="tRNA-binding arm"/>
    <property type="match status" value="1"/>
</dbReference>
<dbReference type="PROSITE" id="PS50862">
    <property type="entry name" value="AA_TRNA_LIGASE_II"/>
    <property type="match status" value="1"/>
</dbReference>
<reference key="1">
    <citation type="journal article" date="2003" name="Nat. Genet.">
        <title>Comparative analysis of the genome sequences of Bordetella pertussis, Bordetella parapertussis and Bordetella bronchiseptica.</title>
        <authorList>
            <person name="Parkhill J."/>
            <person name="Sebaihia M."/>
            <person name="Preston A."/>
            <person name="Murphy L.D."/>
            <person name="Thomson N.R."/>
            <person name="Harris D.E."/>
            <person name="Holden M.T.G."/>
            <person name="Churcher C.M."/>
            <person name="Bentley S.D."/>
            <person name="Mungall K.L."/>
            <person name="Cerdeno-Tarraga A.-M."/>
            <person name="Temple L."/>
            <person name="James K.D."/>
            <person name="Harris B."/>
            <person name="Quail M.A."/>
            <person name="Achtman M."/>
            <person name="Atkin R."/>
            <person name="Baker S."/>
            <person name="Basham D."/>
            <person name="Bason N."/>
            <person name="Cherevach I."/>
            <person name="Chillingworth T."/>
            <person name="Collins M."/>
            <person name="Cronin A."/>
            <person name="Davis P."/>
            <person name="Doggett J."/>
            <person name="Feltwell T."/>
            <person name="Goble A."/>
            <person name="Hamlin N."/>
            <person name="Hauser H."/>
            <person name="Holroyd S."/>
            <person name="Jagels K."/>
            <person name="Leather S."/>
            <person name="Moule S."/>
            <person name="Norberczak H."/>
            <person name="O'Neil S."/>
            <person name="Ormond D."/>
            <person name="Price C."/>
            <person name="Rabbinowitsch E."/>
            <person name="Rutter S."/>
            <person name="Sanders M."/>
            <person name="Saunders D."/>
            <person name="Seeger K."/>
            <person name="Sharp S."/>
            <person name="Simmonds M."/>
            <person name="Skelton J."/>
            <person name="Squares R."/>
            <person name="Squares S."/>
            <person name="Stevens K."/>
            <person name="Unwin L."/>
            <person name="Whitehead S."/>
            <person name="Barrell B.G."/>
            <person name="Maskell D.J."/>
        </authorList>
    </citation>
    <scope>NUCLEOTIDE SEQUENCE [LARGE SCALE GENOMIC DNA]</scope>
    <source>
        <strain>ATCC BAA-588 / NCTC 13252 / RB50</strain>
    </source>
</reference>
<name>SYFA_BORBR</name>